<organism>
    <name type="scientific">Zymomonas mobilis subsp. mobilis (strain ATCC 31821 / ZM4 / CP4)</name>
    <dbReference type="NCBI Taxonomy" id="264203"/>
    <lineage>
        <taxon>Bacteria</taxon>
        <taxon>Pseudomonadati</taxon>
        <taxon>Pseudomonadota</taxon>
        <taxon>Alphaproteobacteria</taxon>
        <taxon>Sphingomonadales</taxon>
        <taxon>Zymomonadaceae</taxon>
        <taxon>Zymomonas</taxon>
    </lineage>
</organism>
<gene>
    <name evidence="1" type="primary">coaD</name>
    <name type="synonym">kdtB</name>
    <name type="ordered locus">ZMO0854</name>
</gene>
<sequence length="178" mass="20038">MDALSPKKQPIALYPGTFDPVTLGHLDIIRRGARIFDHLIIAVAENPGKSPLFSSEERASMIRHEISRLENPTKSRIEVIIYNSLLMDCVESQGASVILRGLRAVADFEYEYQMAGMNQQINNKIETVFLMADSVLQPVASRLVKEIAFYNGNITPFVPPYVVQKLQEAVTRKKSFQD</sequence>
<reference key="1">
    <citation type="submission" date="1999-11" db="EMBL/GenBank/DDBJ databases">
        <authorList>
            <person name="Um H.W."/>
        </authorList>
    </citation>
    <scope>NUCLEOTIDE SEQUENCE [GENOMIC DNA]</scope>
    <source>
        <strain>ATCC 31821 / ZM4 / CP4</strain>
    </source>
</reference>
<reference key="2">
    <citation type="journal article" date="2005" name="Nat. Biotechnol.">
        <title>The genome sequence of the ethanologenic bacterium Zymomonas mobilis ZM4.</title>
        <authorList>
            <person name="Seo J.-S."/>
            <person name="Chong H."/>
            <person name="Park H.S."/>
            <person name="Yoon K.-O."/>
            <person name="Jung C."/>
            <person name="Kim J.J."/>
            <person name="Hong J.H."/>
            <person name="Kim H."/>
            <person name="Kim J.-H."/>
            <person name="Kil J.-I."/>
            <person name="Park C.J."/>
            <person name="Oh H.-M."/>
            <person name="Lee J.-S."/>
            <person name="Jin S.-J."/>
            <person name="Um H.-W."/>
            <person name="Lee H.-J."/>
            <person name="Oh S.-J."/>
            <person name="Kim J.Y."/>
            <person name="Kang H.L."/>
            <person name="Lee S.Y."/>
            <person name="Lee K.J."/>
            <person name="Kang H.S."/>
        </authorList>
    </citation>
    <scope>NUCLEOTIDE SEQUENCE [LARGE SCALE GENOMIC DNA]</scope>
    <source>
        <strain>ATCC 31821 / ZM4 / CP4</strain>
    </source>
</reference>
<comment type="function">
    <text evidence="1">Reversibly transfers an adenylyl group from ATP to 4'-phosphopantetheine, yielding dephospho-CoA (dPCoA) and pyrophosphate.</text>
</comment>
<comment type="catalytic activity">
    <reaction evidence="1">
        <text>(R)-4'-phosphopantetheine + ATP + H(+) = 3'-dephospho-CoA + diphosphate</text>
        <dbReference type="Rhea" id="RHEA:19801"/>
        <dbReference type="ChEBI" id="CHEBI:15378"/>
        <dbReference type="ChEBI" id="CHEBI:30616"/>
        <dbReference type="ChEBI" id="CHEBI:33019"/>
        <dbReference type="ChEBI" id="CHEBI:57328"/>
        <dbReference type="ChEBI" id="CHEBI:61723"/>
        <dbReference type="EC" id="2.7.7.3"/>
    </reaction>
</comment>
<comment type="cofactor">
    <cofactor evidence="1">
        <name>Mg(2+)</name>
        <dbReference type="ChEBI" id="CHEBI:18420"/>
    </cofactor>
</comment>
<comment type="pathway">
    <text evidence="1">Cofactor biosynthesis; coenzyme A biosynthesis; CoA from (R)-pantothenate: step 4/5.</text>
</comment>
<comment type="subunit">
    <text evidence="1">Homohexamer.</text>
</comment>
<comment type="subcellular location">
    <subcellularLocation>
        <location evidence="1">Cytoplasm</location>
    </subcellularLocation>
</comment>
<comment type="similarity">
    <text evidence="1">Belongs to the bacterial CoaD family.</text>
</comment>
<feature type="chain" id="PRO_0000156317" description="Phosphopantetheine adenylyltransferase">
    <location>
        <begin position="1"/>
        <end position="178"/>
    </location>
</feature>
<feature type="binding site" evidence="1">
    <location>
        <begin position="17"/>
        <end position="18"/>
    </location>
    <ligand>
        <name>ATP</name>
        <dbReference type="ChEBI" id="CHEBI:30616"/>
    </ligand>
</feature>
<feature type="binding site" evidence="1">
    <location>
        <position position="17"/>
    </location>
    <ligand>
        <name>substrate</name>
    </ligand>
</feature>
<feature type="binding site" evidence="1">
    <location>
        <position position="25"/>
    </location>
    <ligand>
        <name>ATP</name>
        <dbReference type="ChEBI" id="CHEBI:30616"/>
    </ligand>
</feature>
<feature type="binding site" evidence="1">
    <location>
        <position position="49"/>
    </location>
    <ligand>
        <name>substrate</name>
    </ligand>
</feature>
<feature type="binding site" evidence="1">
    <location>
        <position position="86"/>
    </location>
    <ligand>
        <name>substrate</name>
    </ligand>
</feature>
<feature type="binding site" evidence="1">
    <location>
        <position position="100"/>
    </location>
    <ligand>
        <name>substrate</name>
    </ligand>
</feature>
<feature type="binding site" evidence="1">
    <location>
        <begin position="101"/>
        <end position="103"/>
    </location>
    <ligand>
        <name>ATP</name>
        <dbReference type="ChEBI" id="CHEBI:30616"/>
    </ligand>
</feature>
<feature type="binding site" evidence="1">
    <location>
        <position position="111"/>
    </location>
    <ligand>
        <name>ATP</name>
        <dbReference type="ChEBI" id="CHEBI:30616"/>
    </ligand>
</feature>
<feature type="binding site" evidence="1">
    <location>
        <begin position="136"/>
        <end position="142"/>
    </location>
    <ligand>
        <name>ATP</name>
        <dbReference type="ChEBI" id="CHEBI:30616"/>
    </ligand>
</feature>
<feature type="site" description="Transition state stabilizer" evidence="1">
    <location>
        <position position="25"/>
    </location>
</feature>
<protein>
    <recommendedName>
        <fullName evidence="1">Phosphopantetheine adenylyltransferase</fullName>
        <ecNumber evidence="1">2.7.7.3</ecNumber>
    </recommendedName>
    <alternativeName>
        <fullName evidence="1">Dephospho-CoA pyrophosphorylase</fullName>
    </alternativeName>
    <alternativeName>
        <fullName evidence="1">Pantetheine-phosphate adenylyltransferase</fullName>
        <shortName evidence="1">PPAT</shortName>
    </alternativeName>
</protein>
<accession>Q9RME4</accession>
<accession>Q5NP82</accession>
<evidence type="ECO:0000255" key="1">
    <source>
        <dbReference type="HAMAP-Rule" id="MF_00151"/>
    </source>
</evidence>
<proteinExistence type="inferred from homology"/>
<name>COAD_ZYMMO</name>
<dbReference type="EC" id="2.7.7.3" evidence="1"/>
<dbReference type="EMBL" id="AF203881">
    <property type="protein sequence ID" value="AAF12844.1"/>
    <property type="molecule type" value="Genomic_DNA"/>
</dbReference>
<dbReference type="EMBL" id="AE008692">
    <property type="protein sequence ID" value="AAV89478.1"/>
    <property type="molecule type" value="Genomic_DNA"/>
</dbReference>
<dbReference type="RefSeq" id="WP_011240721.1">
    <property type="nucleotide sequence ID" value="NZ_CP035711.1"/>
</dbReference>
<dbReference type="SMR" id="Q9RME4"/>
<dbReference type="STRING" id="264203.ZMO0854"/>
<dbReference type="KEGG" id="zmo:ZMO0854"/>
<dbReference type="eggNOG" id="COG0669">
    <property type="taxonomic scope" value="Bacteria"/>
</dbReference>
<dbReference type="HOGENOM" id="CLU_100149_0_1_5"/>
<dbReference type="UniPathway" id="UPA00241">
    <property type="reaction ID" value="UER00355"/>
</dbReference>
<dbReference type="Proteomes" id="UP000001173">
    <property type="component" value="Chromosome"/>
</dbReference>
<dbReference type="GO" id="GO:0005737">
    <property type="term" value="C:cytoplasm"/>
    <property type="evidence" value="ECO:0007669"/>
    <property type="project" value="UniProtKB-SubCell"/>
</dbReference>
<dbReference type="GO" id="GO:0005524">
    <property type="term" value="F:ATP binding"/>
    <property type="evidence" value="ECO:0007669"/>
    <property type="project" value="UniProtKB-KW"/>
</dbReference>
<dbReference type="GO" id="GO:0004595">
    <property type="term" value="F:pantetheine-phosphate adenylyltransferase activity"/>
    <property type="evidence" value="ECO:0007669"/>
    <property type="project" value="UniProtKB-UniRule"/>
</dbReference>
<dbReference type="GO" id="GO:0015937">
    <property type="term" value="P:coenzyme A biosynthetic process"/>
    <property type="evidence" value="ECO:0007669"/>
    <property type="project" value="UniProtKB-UniRule"/>
</dbReference>
<dbReference type="CDD" id="cd02163">
    <property type="entry name" value="PPAT"/>
    <property type="match status" value="1"/>
</dbReference>
<dbReference type="Gene3D" id="3.40.50.620">
    <property type="entry name" value="HUPs"/>
    <property type="match status" value="1"/>
</dbReference>
<dbReference type="HAMAP" id="MF_00151">
    <property type="entry name" value="PPAT_bact"/>
    <property type="match status" value="1"/>
</dbReference>
<dbReference type="InterPro" id="IPR004821">
    <property type="entry name" value="Cyt_trans-like"/>
</dbReference>
<dbReference type="InterPro" id="IPR001980">
    <property type="entry name" value="PPAT"/>
</dbReference>
<dbReference type="InterPro" id="IPR014729">
    <property type="entry name" value="Rossmann-like_a/b/a_fold"/>
</dbReference>
<dbReference type="NCBIfam" id="TIGR01510">
    <property type="entry name" value="coaD_prev_kdtB"/>
    <property type="match status" value="1"/>
</dbReference>
<dbReference type="NCBIfam" id="TIGR00125">
    <property type="entry name" value="cyt_tran_rel"/>
    <property type="match status" value="1"/>
</dbReference>
<dbReference type="PANTHER" id="PTHR21342">
    <property type="entry name" value="PHOSPHOPANTETHEINE ADENYLYLTRANSFERASE"/>
    <property type="match status" value="1"/>
</dbReference>
<dbReference type="PANTHER" id="PTHR21342:SF1">
    <property type="entry name" value="PHOSPHOPANTETHEINE ADENYLYLTRANSFERASE"/>
    <property type="match status" value="1"/>
</dbReference>
<dbReference type="Pfam" id="PF01467">
    <property type="entry name" value="CTP_transf_like"/>
    <property type="match status" value="1"/>
</dbReference>
<dbReference type="PRINTS" id="PR01020">
    <property type="entry name" value="LPSBIOSNTHSS"/>
</dbReference>
<dbReference type="SUPFAM" id="SSF52374">
    <property type="entry name" value="Nucleotidylyl transferase"/>
    <property type="match status" value="1"/>
</dbReference>
<keyword id="KW-0067">ATP-binding</keyword>
<keyword id="KW-0173">Coenzyme A biosynthesis</keyword>
<keyword id="KW-0963">Cytoplasm</keyword>
<keyword id="KW-0460">Magnesium</keyword>
<keyword id="KW-0547">Nucleotide-binding</keyword>
<keyword id="KW-0548">Nucleotidyltransferase</keyword>
<keyword id="KW-1185">Reference proteome</keyword>
<keyword id="KW-0808">Transferase</keyword>